<reference key="1">
    <citation type="journal article" date="2007" name="Proc. Natl. Acad. Sci. U.S.A.">
        <title>The genome of Syntrophus aciditrophicus: life at the thermodynamic limit of microbial growth.</title>
        <authorList>
            <person name="McInerney M.J."/>
            <person name="Rohlin L."/>
            <person name="Mouttaki H."/>
            <person name="Kim U."/>
            <person name="Krupp R.S."/>
            <person name="Rios-Hernandez L."/>
            <person name="Sieber J."/>
            <person name="Struchtemeyer C.G."/>
            <person name="Bhattacharyya A."/>
            <person name="Campbell J.W."/>
            <person name="Gunsalus R.P."/>
        </authorList>
    </citation>
    <scope>NUCLEOTIDE SEQUENCE [LARGE SCALE GENOMIC DNA]</scope>
    <source>
        <strain>SB</strain>
    </source>
</reference>
<dbReference type="EC" id="1.6.5.2" evidence="1"/>
<dbReference type="EMBL" id="CP000252">
    <property type="protein sequence ID" value="ABC76231.1"/>
    <property type="molecule type" value="Genomic_DNA"/>
</dbReference>
<dbReference type="RefSeq" id="WP_011416265.1">
    <property type="nucleotide sequence ID" value="NC_007759.1"/>
</dbReference>
<dbReference type="SMR" id="Q2LPM7"/>
<dbReference type="FunCoup" id="Q2LPM7">
    <property type="interactions" value="286"/>
</dbReference>
<dbReference type="STRING" id="56780.SYN_00514"/>
<dbReference type="KEGG" id="sat:SYN_00514"/>
<dbReference type="eggNOG" id="COG0655">
    <property type="taxonomic scope" value="Bacteria"/>
</dbReference>
<dbReference type="HOGENOM" id="CLU_051402_0_2_7"/>
<dbReference type="InParanoid" id="Q2LPM7"/>
<dbReference type="OrthoDB" id="9801479at2"/>
<dbReference type="Proteomes" id="UP000001933">
    <property type="component" value="Chromosome"/>
</dbReference>
<dbReference type="GO" id="GO:0016020">
    <property type="term" value="C:membrane"/>
    <property type="evidence" value="ECO:0007669"/>
    <property type="project" value="TreeGrafter"/>
</dbReference>
<dbReference type="GO" id="GO:0050660">
    <property type="term" value="F:flavin adenine dinucleotide binding"/>
    <property type="evidence" value="ECO:0007669"/>
    <property type="project" value="UniProtKB-UniRule"/>
</dbReference>
<dbReference type="GO" id="GO:0010181">
    <property type="term" value="F:FMN binding"/>
    <property type="evidence" value="ECO:0007669"/>
    <property type="project" value="InterPro"/>
</dbReference>
<dbReference type="GO" id="GO:0051287">
    <property type="term" value="F:NAD binding"/>
    <property type="evidence" value="ECO:0007669"/>
    <property type="project" value="UniProtKB-UniRule"/>
</dbReference>
<dbReference type="GO" id="GO:0050136">
    <property type="term" value="F:NADH:ubiquinone reductase (non-electrogenic) activity"/>
    <property type="evidence" value="ECO:0007669"/>
    <property type="project" value="RHEA"/>
</dbReference>
<dbReference type="GO" id="GO:0050661">
    <property type="term" value="F:NADP binding"/>
    <property type="evidence" value="ECO:0007669"/>
    <property type="project" value="UniProtKB-UniRule"/>
</dbReference>
<dbReference type="GO" id="GO:0008753">
    <property type="term" value="F:NADPH dehydrogenase (quinone) activity"/>
    <property type="evidence" value="ECO:0007669"/>
    <property type="project" value="RHEA"/>
</dbReference>
<dbReference type="FunFam" id="3.40.50.360:FF:000001">
    <property type="entry name" value="NAD(P)H dehydrogenase (Quinone) FQR1-like"/>
    <property type="match status" value="1"/>
</dbReference>
<dbReference type="Gene3D" id="3.40.50.360">
    <property type="match status" value="1"/>
</dbReference>
<dbReference type="HAMAP" id="MF_01017">
    <property type="entry name" value="NQOR"/>
    <property type="match status" value="1"/>
</dbReference>
<dbReference type="InterPro" id="IPR008254">
    <property type="entry name" value="Flavodoxin/NO_synth"/>
</dbReference>
<dbReference type="InterPro" id="IPR029039">
    <property type="entry name" value="Flavoprotein-like_sf"/>
</dbReference>
<dbReference type="InterPro" id="IPR010089">
    <property type="entry name" value="Flavoprotein_WrbA-like"/>
</dbReference>
<dbReference type="InterPro" id="IPR005025">
    <property type="entry name" value="FMN_Rdtase-like_dom"/>
</dbReference>
<dbReference type="InterPro" id="IPR037513">
    <property type="entry name" value="NQO"/>
</dbReference>
<dbReference type="NCBIfam" id="TIGR01755">
    <property type="entry name" value="flav_wrbA"/>
    <property type="match status" value="1"/>
</dbReference>
<dbReference type="NCBIfam" id="NF002999">
    <property type="entry name" value="PRK03767.1"/>
    <property type="match status" value="1"/>
</dbReference>
<dbReference type="PANTHER" id="PTHR30546">
    <property type="entry name" value="FLAVODOXIN-RELATED PROTEIN WRBA-RELATED"/>
    <property type="match status" value="1"/>
</dbReference>
<dbReference type="PANTHER" id="PTHR30546:SF23">
    <property type="entry name" value="FLAVOPROTEIN-LIKE PROTEIN YCP4-RELATED"/>
    <property type="match status" value="1"/>
</dbReference>
<dbReference type="Pfam" id="PF03358">
    <property type="entry name" value="FMN_red"/>
    <property type="match status" value="1"/>
</dbReference>
<dbReference type="SUPFAM" id="SSF52218">
    <property type="entry name" value="Flavoproteins"/>
    <property type="match status" value="1"/>
</dbReference>
<dbReference type="PROSITE" id="PS50902">
    <property type="entry name" value="FLAVODOXIN_LIKE"/>
    <property type="match status" value="1"/>
</dbReference>
<proteinExistence type="inferred from homology"/>
<name>NQOR_SYNAS</name>
<feature type="chain" id="PRO_0000291034" description="NAD(P)H dehydrogenase (quinone)">
    <location>
        <begin position="1"/>
        <end position="203"/>
    </location>
</feature>
<feature type="domain" description="Flavodoxin-like" evidence="1">
    <location>
        <begin position="3"/>
        <end position="194"/>
    </location>
</feature>
<feature type="binding site" evidence="1">
    <location>
        <begin position="9"/>
        <end position="14"/>
    </location>
    <ligand>
        <name>FMN</name>
        <dbReference type="ChEBI" id="CHEBI:58210"/>
    </ligand>
</feature>
<feature type="binding site" evidence="1">
    <location>
        <position position="11"/>
    </location>
    <ligand>
        <name>NAD(+)</name>
        <dbReference type="ChEBI" id="CHEBI:57540"/>
    </ligand>
</feature>
<feature type="binding site" evidence="1">
    <location>
        <begin position="82"/>
        <end position="84"/>
    </location>
    <ligand>
        <name>FMN</name>
        <dbReference type="ChEBI" id="CHEBI:58210"/>
    </ligand>
</feature>
<feature type="binding site" evidence="1">
    <location>
        <position position="102"/>
    </location>
    <ligand>
        <name>substrate</name>
    </ligand>
</feature>
<feature type="binding site" evidence="1">
    <location>
        <begin position="117"/>
        <end position="123"/>
    </location>
    <ligand>
        <name>FMN</name>
        <dbReference type="ChEBI" id="CHEBI:58210"/>
    </ligand>
</feature>
<feature type="binding site" evidence="1">
    <location>
        <position position="138"/>
    </location>
    <ligand>
        <name>FMN</name>
        <dbReference type="ChEBI" id="CHEBI:58210"/>
    </ligand>
</feature>
<organism>
    <name type="scientific">Syntrophus aciditrophicus (strain SB)</name>
    <dbReference type="NCBI Taxonomy" id="56780"/>
    <lineage>
        <taxon>Bacteria</taxon>
        <taxon>Pseudomonadati</taxon>
        <taxon>Thermodesulfobacteriota</taxon>
        <taxon>Syntrophia</taxon>
        <taxon>Syntrophales</taxon>
        <taxon>Syntrophaceae</taxon>
        <taxon>Syntrophus</taxon>
    </lineage>
</organism>
<keyword id="KW-0285">Flavoprotein</keyword>
<keyword id="KW-0288">FMN</keyword>
<keyword id="KW-0520">NAD</keyword>
<keyword id="KW-0521">NADP</keyword>
<keyword id="KW-0547">Nucleotide-binding</keyword>
<keyword id="KW-0560">Oxidoreductase</keyword>
<keyword id="KW-1185">Reference proteome</keyword>
<gene>
    <name type="ordered locus">SYNAS_03520</name>
    <name type="ORF">SYN_00514</name>
</gene>
<protein>
    <recommendedName>
        <fullName evidence="1">NAD(P)H dehydrogenase (quinone)</fullName>
        <ecNumber evidence="1">1.6.5.2</ecNumber>
    </recommendedName>
    <alternativeName>
        <fullName>Flavoprotein WrbA</fullName>
    </alternativeName>
    <alternativeName>
        <fullName evidence="1">NAD(P)H:quinone oxidoreductase</fullName>
        <shortName evidence="1">NQO</shortName>
    </alternativeName>
</protein>
<sequence length="203" mass="21714">MKIMVVYYSAYGHVHRLAEAVAEGASEIVDVEVVMRRVPETLPEALLKKIGVFEAQQAFAHVPVCEVAELETADAILFGTPARFGNMCGQMRSFLDATGGLWAKGALVGKVGSVFTSTGTQHGGQESTILSFHTTLLHHGMIIVGLPYTFQGQSRNDEITGCSPYGASTIAGSANDRWPTENELAGANFQGRHVACIAGKLFQ</sequence>
<accession>Q2LPM7</accession>
<comment type="catalytic activity">
    <reaction evidence="1">
        <text>a quinone + NADH + H(+) = a quinol + NAD(+)</text>
        <dbReference type="Rhea" id="RHEA:46160"/>
        <dbReference type="ChEBI" id="CHEBI:15378"/>
        <dbReference type="ChEBI" id="CHEBI:24646"/>
        <dbReference type="ChEBI" id="CHEBI:57540"/>
        <dbReference type="ChEBI" id="CHEBI:57945"/>
        <dbReference type="ChEBI" id="CHEBI:132124"/>
        <dbReference type="EC" id="1.6.5.2"/>
    </reaction>
</comment>
<comment type="catalytic activity">
    <reaction evidence="1">
        <text>a quinone + NADPH + H(+) = a quinol + NADP(+)</text>
        <dbReference type="Rhea" id="RHEA:46164"/>
        <dbReference type="ChEBI" id="CHEBI:15378"/>
        <dbReference type="ChEBI" id="CHEBI:24646"/>
        <dbReference type="ChEBI" id="CHEBI:57783"/>
        <dbReference type="ChEBI" id="CHEBI:58349"/>
        <dbReference type="ChEBI" id="CHEBI:132124"/>
        <dbReference type="EC" id="1.6.5.2"/>
    </reaction>
</comment>
<comment type="cofactor">
    <cofactor evidence="1">
        <name>FMN</name>
        <dbReference type="ChEBI" id="CHEBI:58210"/>
    </cofactor>
    <text evidence="1">Binds 1 FMN per monomer.</text>
</comment>
<comment type="similarity">
    <text evidence="1">Belongs to the WrbA family.</text>
</comment>
<evidence type="ECO:0000255" key="1">
    <source>
        <dbReference type="HAMAP-Rule" id="MF_01017"/>
    </source>
</evidence>